<sequence length="110" mass="12418">MSIQNLNTFDPFADAIKGADYDVQDGLVHIRIQQRNGRKTLTTVQGLSAEYDLKKIVRACKKEFACNGTVIEHPEYGEVLQLQGDQRENICQWLTKSGLAKPEQLKVHGF</sequence>
<comment type="function">
    <text>Probably involved in translation.</text>
</comment>
<comment type="similarity">
    <text evidence="2">Belongs to the SUI1 family.</text>
</comment>
<evidence type="ECO:0000250" key="1">
    <source>
        <dbReference type="UniProtKB" id="Q9VZS3"/>
    </source>
</evidence>
<evidence type="ECO:0000305" key="2"/>
<proteinExistence type="inferred from homology"/>
<protein>
    <recommendedName>
        <fullName evidence="1">Eukaryotic translation initiation factor eIF1</fullName>
    </recommendedName>
    <alternativeName>
        <fullName evidence="1">Protein translation factor SUI1 homolog</fullName>
    </alternativeName>
</protein>
<accession>P42678</accession>
<accession>Q7Q5F8</accession>
<keyword id="KW-0648">Protein biosynthesis</keyword>
<keyword id="KW-1185">Reference proteome</keyword>
<keyword id="KW-0810">Translation regulation</keyword>
<dbReference type="EMBL" id="U02588">
    <property type="protein sequence ID" value="AAA18901.1"/>
    <property type="molecule type" value="mRNA"/>
</dbReference>
<dbReference type="EMBL" id="AAAB01008960">
    <property type="protein sequence ID" value="EAA11885.2"/>
    <property type="molecule type" value="Genomic_DNA"/>
</dbReference>
<dbReference type="SMR" id="P42678"/>
<dbReference type="FunCoup" id="P42678">
    <property type="interactions" value="1151"/>
</dbReference>
<dbReference type="STRING" id="7165.P42678"/>
<dbReference type="PaxDb" id="7165-AGAP006459-PA"/>
<dbReference type="EnsemblMetazoa" id="AGAP006459-RA">
    <property type="protein sequence ID" value="AGAP006459-PA"/>
    <property type="gene ID" value="AGAP006459"/>
</dbReference>
<dbReference type="GeneID" id="1277069"/>
<dbReference type="KEGG" id="aga:1277069"/>
<dbReference type="CTD" id="10209"/>
<dbReference type="VEuPathDB" id="VectorBase:AGAMI1_007880"/>
<dbReference type="VEuPathDB" id="VectorBase:AGAP006459"/>
<dbReference type="eggNOG" id="KOG1770">
    <property type="taxonomic scope" value="Eukaryota"/>
</dbReference>
<dbReference type="HOGENOM" id="CLU_082805_3_2_1"/>
<dbReference type="InParanoid" id="P42678"/>
<dbReference type="OMA" id="VENHIHI"/>
<dbReference type="OrthoDB" id="10248435at2759"/>
<dbReference type="PhylomeDB" id="P42678"/>
<dbReference type="Proteomes" id="UP000007062">
    <property type="component" value="Chromosome 2L"/>
</dbReference>
<dbReference type="GO" id="GO:0016282">
    <property type="term" value="C:eukaryotic 43S preinitiation complex"/>
    <property type="evidence" value="ECO:0000318"/>
    <property type="project" value="GO_Central"/>
</dbReference>
<dbReference type="GO" id="GO:0043024">
    <property type="term" value="F:ribosomal small subunit binding"/>
    <property type="evidence" value="ECO:0000318"/>
    <property type="project" value="GO_Central"/>
</dbReference>
<dbReference type="GO" id="GO:0003723">
    <property type="term" value="F:RNA binding"/>
    <property type="evidence" value="ECO:0000318"/>
    <property type="project" value="GO_Central"/>
</dbReference>
<dbReference type="GO" id="GO:0003743">
    <property type="term" value="F:translation initiation factor activity"/>
    <property type="evidence" value="ECO:0000318"/>
    <property type="project" value="GO_Central"/>
</dbReference>
<dbReference type="GO" id="GO:0006417">
    <property type="term" value="P:regulation of translation"/>
    <property type="evidence" value="ECO:0007669"/>
    <property type="project" value="UniProtKB-KW"/>
</dbReference>
<dbReference type="CDD" id="cd11566">
    <property type="entry name" value="eIF1_SUI1"/>
    <property type="match status" value="1"/>
</dbReference>
<dbReference type="FunFam" id="3.30.780.10:FF:000010">
    <property type="entry name" value="Protein translation factor SUI1"/>
    <property type="match status" value="1"/>
</dbReference>
<dbReference type="Gene3D" id="3.30.780.10">
    <property type="entry name" value="SUI1-like domain"/>
    <property type="match status" value="1"/>
</dbReference>
<dbReference type="InterPro" id="IPR001950">
    <property type="entry name" value="SUI1"/>
</dbReference>
<dbReference type="InterPro" id="IPR036877">
    <property type="entry name" value="SUI1_dom_sf"/>
</dbReference>
<dbReference type="InterPro" id="IPR005874">
    <property type="entry name" value="SUI1_euk"/>
</dbReference>
<dbReference type="NCBIfam" id="TIGR01160">
    <property type="entry name" value="SUI1_MOF2"/>
    <property type="match status" value="1"/>
</dbReference>
<dbReference type="PANTHER" id="PTHR10388">
    <property type="entry name" value="EUKARYOTIC TRANSLATION INITIATION FACTOR SUI1"/>
    <property type="match status" value="1"/>
</dbReference>
<dbReference type="Pfam" id="PF01253">
    <property type="entry name" value="SUI1"/>
    <property type="match status" value="1"/>
</dbReference>
<dbReference type="PIRSF" id="PIRSF004499">
    <property type="entry name" value="SUI1_euk"/>
    <property type="match status" value="1"/>
</dbReference>
<dbReference type="SUPFAM" id="SSF55159">
    <property type="entry name" value="eIF1-like"/>
    <property type="match status" value="1"/>
</dbReference>
<dbReference type="PROSITE" id="PS50296">
    <property type="entry name" value="SUI1"/>
    <property type="match status" value="1"/>
</dbReference>
<feature type="chain" id="PRO_0000130562" description="Eukaryotic translation initiation factor eIF1">
    <location>
        <begin position="1"/>
        <end position="110"/>
    </location>
</feature>
<reference key="1">
    <citation type="journal article" date="1994" name="Gene">
        <title>An Anopheles gambiae cDNA predicts a protein similar to a yeast Sui1 translation factor.</title>
        <authorList>
            <person name="Besansky N.J."/>
            <person name="Hamm D.M."/>
            <person name="Collins F.H."/>
        </authorList>
    </citation>
    <scope>NUCLEOTIDE SEQUENCE [MRNA]</scope>
    <source>
        <strain>G3</strain>
    </source>
</reference>
<reference key="2">
    <citation type="journal article" date="2002" name="Science">
        <title>The genome sequence of the malaria mosquito Anopheles gambiae.</title>
        <authorList>
            <person name="Holt R.A."/>
            <person name="Subramanian G.M."/>
            <person name="Halpern A."/>
            <person name="Sutton G.G."/>
            <person name="Charlab R."/>
            <person name="Nusskern D.R."/>
            <person name="Wincker P."/>
            <person name="Clark A.G."/>
            <person name="Ribeiro J.M.C."/>
            <person name="Wides R."/>
            <person name="Salzberg S.L."/>
            <person name="Loftus B.J."/>
            <person name="Yandell M.D."/>
            <person name="Majoros W.H."/>
            <person name="Rusch D.B."/>
            <person name="Lai Z."/>
            <person name="Kraft C.L."/>
            <person name="Abril J.F."/>
            <person name="Anthouard V."/>
            <person name="Arensburger P."/>
            <person name="Atkinson P.W."/>
            <person name="Baden H."/>
            <person name="de Berardinis V."/>
            <person name="Baldwin D."/>
            <person name="Benes V."/>
            <person name="Biedler J."/>
            <person name="Blass C."/>
            <person name="Bolanos R."/>
            <person name="Boscus D."/>
            <person name="Barnstead M."/>
            <person name="Cai S."/>
            <person name="Center A."/>
            <person name="Chaturverdi K."/>
            <person name="Christophides G.K."/>
            <person name="Chrystal M.A.M."/>
            <person name="Clamp M."/>
            <person name="Cravchik A."/>
            <person name="Curwen V."/>
            <person name="Dana A."/>
            <person name="Delcher A."/>
            <person name="Dew I."/>
            <person name="Evans C.A."/>
            <person name="Flanigan M."/>
            <person name="Grundschober-Freimoser A."/>
            <person name="Friedli L."/>
            <person name="Gu Z."/>
            <person name="Guan P."/>
            <person name="Guigo R."/>
            <person name="Hillenmeyer M.E."/>
            <person name="Hladun S.L."/>
            <person name="Hogan J.R."/>
            <person name="Hong Y.S."/>
            <person name="Hoover J."/>
            <person name="Jaillon O."/>
            <person name="Ke Z."/>
            <person name="Kodira C.D."/>
            <person name="Kokoza E."/>
            <person name="Koutsos A."/>
            <person name="Letunic I."/>
            <person name="Levitsky A.A."/>
            <person name="Liang Y."/>
            <person name="Lin J.-J."/>
            <person name="Lobo N.F."/>
            <person name="Lopez J.R."/>
            <person name="Malek J.A."/>
            <person name="McIntosh T.C."/>
            <person name="Meister S."/>
            <person name="Miller J.R."/>
            <person name="Mobarry C."/>
            <person name="Mongin E."/>
            <person name="Murphy S.D."/>
            <person name="O'Brochta D.A."/>
            <person name="Pfannkoch C."/>
            <person name="Qi R."/>
            <person name="Regier M.A."/>
            <person name="Remington K."/>
            <person name="Shao H."/>
            <person name="Sharakhova M.V."/>
            <person name="Sitter C.D."/>
            <person name="Shetty J."/>
            <person name="Smith T.J."/>
            <person name="Strong R."/>
            <person name="Sun J."/>
            <person name="Thomasova D."/>
            <person name="Ton L.Q."/>
            <person name="Topalis P."/>
            <person name="Tu Z.J."/>
            <person name="Unger M.F."/>
            <person name="Walenz B."/>
            <person name="Wang A.H."/>
            <person name="Wang J."/>
            <person name="Wang M."/>
            <person name="Wang X."/>
            <person name="Woodford K.J."/>
            <person name="Wortman J.R."/>
            <person name="Wu M."/>
            <person name="Yao A."/>
            <person name="Zdobnov E.M."/>
            <person name="Zhang H."/>
            <person name="Zhao Q."/>
            <person name="Zhao S."/>
            <person name="Zhu S.C."/>
            <person name="Zhimulev I."/>
            <person name="Coluzzi M."/>
            <person name="della Torre A."/>
            <person name="Roth C.W."/>
            <person name="Louis C."/>
            <person name="Kalush F."/>
            <person name="Mural R.J."/>
            <person name="Myers E.W."/>
            <person name="Adams M.D."/>
            <person name="Smith H.O."/>
            <person name="Broder S."/>
            <person name="Gardner M.J."/>
            <person name="Fraser C.M."/>
            <person name="Birney E."/>
            <person name="Bork P."/>
            <person name="Brey P.T."/>
            <person name="Venter J.C."/>
            <person name="Weissenbach J."/>
            <person name="Kafatos F.C."/>
            <person name="Collins F.H."/>
            <person name="Hoffman S.L."/>
        </authorList>
    </citation>
    <scope>NUCLEOTIDE SEQUENCE [LARGE SCALE GENOMIC DNA]</scope>
    <source>
        <strain>PEST</strain>
    </source>
</reference>
<organism>
    <name type="scientific">Anopheles gambiae</name>
    <name type="common">African malaria mosquito</name>
    <dbReference type="NCBI Taxonomy" id="7165"/>
    <lineage>
        <taxon>Eukaryota</taxon>
        <taxon>Metazoa</taxon>
        <taxon>Ecdysozoa</taxon>
        <taxon>Arthropoda</taxon>
        <taxon>Hexapoda</taxon>
        <taxon>Insecta</taxon>
        <taxon>Pterygota</taxon>
        <taxon>Neoptera</taxon>
        <taxon>Endopterygota</taxon>
        <taxon>Diptera</taxon>
        <taxon>Nematocera</taxon>
        <taxon>Culicoidea</taxon>
        <taxon>Culicidae</taxon>
        <taxon>Anophelinae</taxon>
        <taxon>Anopheles</taxon>
    </lineage>
</organism>
<gene>
    <name evidence="1" type="primary">eIF1</name>
    <name type="ORF">AGAP006459</name>
</gene>
<name>ETIF1_ANOGA</name>